<name>RUVC_DESHD</name>
<evidence type="ECO:0000255" key="1">
    <source>
        <dbReference type="HAMAP-Rule" id="MF_00034"/>
    </source>
</evidence>
<keyword id="KW-0963">Cytoplasm</keyword>
<keyword id="KW-0227">DNA damage</keyword>
<keyword id="KW-0233">DNA recombination</keyword>
<keyword id="KW-0234">DNA repair</keyword>
<keyword id="KW-0238">DNA-binding</keyword>
<keyword id="KW-0255">Endonuclease</keyword>
<keyword id="KW-0378">Hydrolase</keyword>
<keyword id="KW-0460">Magnesium</keyword>
<keyword id="KW-0479">Metal-binding</keyword>
<keyword id="KW-0540">Nuclease</keyword>
<accession>B8FQV7</accession>
<gene>
    <name evidence="1" type="primary">ruvC</name>
    <name type="ordered locus">Dhaf_3627</name>
</gene>
<feature type="chain" id="PRO_1000195247" description="Crossover junction endodeoxyribonuclease RuvC">
    <location>
        <begin position="1"/>
        <end position="165"/>
    </location>
</feature>
<feature type="active site" evidence="1">
    <location>
        <position position="7"/>
    </location>
</feature>
<feature type="active site" evidence="1">
    <location>
        <position position="67"/>
    </location>
</feature>
<feature type="active site" evidence="1">
    <location>
        <position position="140"/>
    </location>
</feature>
<feature type="binding site" evidence="1">
    <location>
        <position position="7"/>
    </location>
    <ligand>
        <name>Mg(2+)</name>
        <dbReference type="ChEBI" id="CHEBI:18420"/>
        <label>1</label>
    </ligand>
</feature>
<feature type="binding site" evidence="1">
    <location>
        <position position="67"/>
    </location>
    <ligand>
        <name>Mg(2+)</name>
        <dbReference type="ChEBI" id="CHEBI:18420"/>
        <label>2</label>
    </ligand>
</feature>
<feature type="binding site" evidence="1">
    <location>
        <position position="140"/>
    </location>
    <ligand>
        <name>Mg(2+)</name>
        <dbReference type="ChEBI" id="CHEBI:18420"/>
        <label>1</label>
    </ligand>
</feature>
<protein>
    <recommendedName>
        <fullName evidence="1">Crossover junction endodeoxyribonuclease RuvC</fullName>
        <ecNumber evidence="1">3.1.21.10</ecNumber>
    </recommendedName>
    <alternativeName>
        <fullName evidence="1">Holliday junction nuclease RuvC</fullName>
    </alternativeName>
    <alternativeName>
        <fullName evidence="1">Holliday junction resolvase RuvC</fullName>
    </alternativeName>
</protein>
<organism>
    <name type="scientific">Desulfitobacterium hafniense (strain DSM 10664 / DCB-2)</name>
    <dbReference type="NCBI Taxonomy" id="272564"/>
    <lineage>
        <taxon>Bacteria</taxon>
        <taxon>Bacillati</taxon>
        <taxon>Bacillota</taxon>
        <taxon>Clostridia</taxon>
        <taxon>Eubacteriales</taxon>
        <taxon>Desulfitobacteriaceae</taxon>
        <taxon>Desulfitobacterium</taxon>
    </lineage>
</organism>
<comment type="function">
    <text evidence="1">The RuvA-RuvB-RuvC complex processes Holliday junction (HJ) DNA during genetic recombination and DNA repair. Endonuclease that resolves HJ intermediates. Cleaves cruciform DNA by making single-stranded nicks across the HJ at symmetrical positions within the homologous arms, yielding a 5'-phosphate and a 3'-hydroxyl group; requires a central core of homology in the junction. The consensus cleavage sequence is 5'-(A/T)TT(C/G)-3'. Cleavage occurs on the 3'-side of the TT dinucleotide at the point of strand exchange. HJ branch migration catalyzed by RuvA-RuvB allows RuvC to scan DNA until it finds its consensus sequence, where it cleaves and resolves the cruciform DNA.</text>
</comment>
<comment type="catalytic activity">
    <reaction evidence="1">
        <text>Endonucleolytic cleavage at a junction such as a reciprocal single-stranded crossover between two homologous DNA duplexes (Holliday junction).</text>
        <dbReference type="EC" id="3.1.21.10"/>
    </reaction>
</comment>
<comment type="cofactor">
    <cofactor evidence="1">
        <name>Mg(2+)</name>
        <dbReference type="ChEBI" id="CHEBI:18420"/>
    </cofactor>
    <text evidence="1">Binds 2 Mg(2+) ion per subunit.</text>
</comment>
<comment type="subunit">
    <text evidence="1">Homodimer which binds Holliday junction (HJ) DNA. The HJ becomes 2-fold symmetrical on binding to RuvC with unstacked arms; it has a different conformation from HJ DNA in complex with RuvA. In the full resolvosome a probable DNA-RuvA(4)-RuvB(12)-RuvC(2) complex forms which resolves the HJ.</text>
</comment>
<comment type="subcellular location">
    <subcellularLocation>
        <location evidence="1">Cytoplasm</location>
    </subcellularLocation>
</comment>
<comment type="similarity">
    <text evidence="1">Belongs to the RuvC family.</text>
</comment>
<dbReference type="EC" id="3.1.21.10" evidence="1"/>
<dbReference type="EMBL" id="CP001336">
    <property type="protein sequence ID" value="ACL21644.1"/>
    <property type="molecule type" value="Genomic_DNA"/>
</dbReference>
<dbReference type="RefSeq" id="WP_005810732.1">
    <property type="nucleotide sequence ID" value="NC_011830.1"/>
</dbReference>
<dbReference type="SMR" id="B8FQV7"/>
<dbReference type="KEGG" id="dhd:Dhaf_3627"/>
<dbReference type="HOGENOM" id="CLU_091257_3_1_9"/>
<dbReference type="Proteomes" id="UP000007726">
    <property type="component" value="Chromosome"/>
</dbReference>
<dbReference type="GO" id="GO:0005737">
    <property type="term" value="C:cytoplasm"/>
    <property type="evidence" value="ECO:0007669"/>
    <property type="project" value="UniProtKB-SubCell"/>
</dbReference>
<dbReference type="GO" id="GO:0048476">
    <property type="term" value="C:Holliday junction resolvase complex"/>
    <property type="evidence" value="ECO:0007669"/>
    <property type="project" value="UniProtKB-UniRule"/>
</dbReference>
<dbReference type="GO" id="GO:0008821">
    <property type="term" value="F:crossover junction DNA endonuclease activity"/>
    <property type="evidence" value="ECO:0007669"/>
    <property type="project" value="UniProtKB-UniRule"/>
</dbReference>
<dbReference type="GO" id="GO:0003677">
    <property type="term" value="F:DNA binding"/>
    <property type="evidence" value="ECO:0007669"/>
    <property type="project" value="UniProtKB-KW"/>
</dbReference>
<dbReference type="GO" id="GO:0000287">
    <property type="term" value="F:magnesium ion binding"/>
    <property type="evidence" value="ECO:0007669"/>
    <property type="project" value="UniProtKB-UniRule"/>
</dbReference>
<dbReference type="GO" id="GO:0006310">
    <property type="term" value="P:DNA recombination"/>
    <property type="evidence" value="ECO:0007669"/>
    <property type="project" value="UniProtKB-UniRule"/>
</dbReference>
<dbReference type="GO" id="GO:0006281">
    <property type="term" value="P:DNA repair"/>
    <property type="evidence" value="ECO:0007669"/>
    <property type="project" value="UniProtKB-UniRule"/>
</dbReference>
<dbReference type="CDD" id="cd16962">
    <property type="entry name" value="RuvC"/>
    <property type="match status" value="1"/>
</dbReference>
<dbReference type="FunFam" id="3.30.420.10:FF:000002">
    <property type="entry name" value="Crossover junction endodeoxyribonuclease RuvC"/>
    <property type="match status" value="1"/>
</dbReference>
<dbReference type="Gene3D" id="3.30.420.10">
    <property type="entry name" value="Ribonuclease H-like superfamily/Ribonuclease H"/>
    <property type="match status" value="1"/>
</dbReference>
<dbReference type="HAMAP" id="MF_00034">
    <property type="entry name" value="RuvC"/>
    <property type="match status" value="1"/>
</dbReference>
<dbReference type="InterPro" id="IPR012337">
    <property type="entry name" value="RNaseH-like_sf"/>
</dbReference>
<dbReference type="InterPro" id="IPR036397">
    <property type="entry name" value="RNaseH_sf"/>
</dbReference>
<dbReference type="InterPro" id="IPR020563">
    <property type="entry name" value="X-over_junc_endoDNase_Mg_BS"/>
</dbReference>
<dbReference type="InterPro" id="IPR002176">
    <property type="entry name" value="X-over_junc_endoDNase_RuvC"/>
</dbReference>
<dbReference type="NCBIfam" id="NF000711">
    <property type="entry name" value="PRK00039.2-1"/>
    <property type="match status" value="1"/>
</dbReference>
<dbReference type="NCBIfam" id="TIGR00228">
    <property type="entry name" value="ruvC"/>
    <property type="match status" value="1"/>
</dbReference>
<dbReference type="PANTHER" id="PTHR30194">
    <property type="entry name" value="CROSSOVER JUNCTION ENDODEOXYRIBONUCLEASE RUVC"/>
    <property type="match status" value="1"/>
</dbReference>
<dbReference type="PANTHER" id="PTHR30194:SF3">
    <property type="entry name" value="CROSSOVER JUNCTION ENDODEOXYRIBONUCLEASE RUVC"/>
    <property type="match status" value="1"/>
</dbReference>
<dbReference type="Pfam" id="PF02075">
    <property type="entry name" value="RuvC"/>
    <property type="match status" value="1"/>
</dbReference>
<dbReference type="PRINTS" id="PR00696">
    <property type="entry name" value="RSOLVASERUVC"/>
</dbReference>
<dbReference type="SUPFAM" id="SSF53098">
    <property type="entry name" value="Ribonuclease H-like"/>
    <property type="match status" value="1"/>
</dbReference>
<dbReference type="PROSITE" id="PS01321">
    <property type="entry name" value="RUVC"/>
    <property type="match status" value="1"/>
</dbReference>
<proteinExistence type="inferred from homology"/>
<sequence>MLILGIDPGTAIMGYGLIEKKGNRLFPVDYACWRTPAHTPMPERLLMLYHEIEAYIKEKQPHHVAVEELFFNRNTTTAISVGQARGVVLLAAAQCGLPVYEYTPLQVKQAVAGYGRADKQQIQQMVRALLGLQEIPKPDDTADALAIAICHAHSVNLLNRMGGAL</sequence>
<reference key="1">
    <citation type="journal article" date="2012" name="BMC Microbiol.">
        <title>Genome sequence of Desulfitobacterium hafniense DCB-2, a Gram-positive anaerobe capable of dehalogenation and metal reduction.</title>
        <authorList>
            <person name="Kim S.H."/>
            <person name="Harzman C."/>
            <person name="Davis J.K."/>
            <person name="Hutcheson R."/>
            <person name="Broderick J.B."/>
            <person name="Marsh T.L."/>
            <person name="Tiedje J.M."/>
        </authorList>
    </citation>
    <scope>NUCLEOTIDE SEQUENCE [LARGE SCALE GENOMIC DNA]</scope>
    <source>
        <strain>DSM 10664 / DCB-2</strain>
    </source>
</reference>